<reference key="1">
    <citation type="journal article" date="1996" name="Science">
        <title>Complete genome sequence of the methanogenic archaeon, Methanococcus jannaschii.</title>
        <authorList>
            <person name="Bult C.J."/>
            <person name="White O."/>
            <person name="Olsen G.J."/>
            <person name="Zhou L."/>
            <person name="Fleischmann R.D."/>
            <person name="Sutton G.G."/>
            <person name="Blake J.A."/>
            <person name="FitzGerald L.M."/>
            <person name="Clayton R.A."/>
            <person name="Gocayne J.D."/>
            <person name="Kerlavage A.R."/>
            <person name="Dougherty B.A."/>
            <person name="Tomb J.-F."/>
            <person name="Adams M.D."/>
            <person name="Reich C.I."/>
            <person name="Overbeek R."/>
            <person name="Kirkness E.F."/>
            <person name="Weinstock K.G."/>
            <person name="Merrick J.M."/>
            <person name="Glodek A."/>
            <person name="Scott J.L."/>
            <person name="Geoghagen N.S.M."/>
            <person name="Weidman J.F."/>
            <person name="Fuhrmann J.L."/>
            <person name="Nguyen D."/>
            <person name="Utterback T.R."/>
            <person name="Kelley J.M."/>
            <person name="Peterson J.D."/>
            <person name="Sadow P.W."/>
            <person name="Hanna M.C."/>
            <person name="Cotton M.D."/>
            <person name="Roberts K.M."/>
            <person name="Hurst M.A."/>
            <person name="Kaine B.P."/>
            <person name="Borodovsky M."/>
            <person name="Klenk H.-P."/>
            <person name="Fraser C.M."/>
            <person name="Smith H.O."/>
            <person name="Woese C.R."/>
            <person name="Venter J.C."/>
        </authorList>
    </citation>
    <scope>NUCLEOTIDE SEQUENCE [LARGE SCALE GENOMIC DNA]</scope>
    <source>
        <strain>ATCC 43067 / DSM 2661 / JAL-1 / JCM 10045 / NBRC 100440</strain>
    </source>
</reference>
<feature type="chain" id="PRO_0000107484" description="Uncharacterized protein MJECS03">
    <location>
        <begin position="1"/>
        <end position="108"/>
    </location>
</feature>
<keyword id="KW-0614">Plasmid</keyword>
<keyword id="KW-1185">Reference proteome</keyword>
<gene>
    <name type="ordered locus">MJECS03</name>
</gene>
<geneLocation type="plasmid">
    <name>small ECE</name>
</geneLocation>
<name>Y3403_METJA</name>
<accession>Q60302</accession>
<organism>
    <name type="scientific">Methanocaldococcus jannaschii (strain ATCC 43067 / DSM 2661 / JAL-1 / JCM 10045 / NBRC 100440)</name>
    <name type="common">Methanococcus jannaschii</name>
    <dbReference type="NCBI Taxonomy" id="243232"/>
    <lineage>
        <taxon>Archaea</taxon>
        <taxon>Methanobacteriati</taxon>
        <taxon>Methanobacteriota</taxon>
        <taxon>Methanomada group</taxon>
        <taxon>Methanococci</taxon>
        <taxon>Methanococcales</taxon>
        <taxon>Methanocaldococcaceae</taxon>
        <taxon>Methanocaldococcus</taxon>
    </lineage>
</organism>
<sequence>MKIIFYASREEQGFYGEAEIEEVEFFENPMKILEKYKNNLFLTEEEFKKYIEDSNKKWGYGKKKKKPWIVIILKNIRKYPKVVKPKRFIPVCGKYVKEDEYEQILKKL</sequence>
<dbReference type="EMBL" id="L77119">
    <property type="protein sequence ID" value="AAC37061.1"/>
    <property type="molecule type" value="Genomic_DNA"/>
</dbReference>
<dbReference type="PIR" id="C64516">
    <property type="entry name" value="C64516"/>
</dbReference>
<dbReference type="RefSeq" id="WP_010890096.1">
    <property type="nucleotide sequence ID" value="NC_001733.1"/>
</dbReference>
<dbReference type="SMR" id="Q60302"/>
<dbReference type="PaxDb" id="243232-MJ_ECS03"/>
<dbReference type="EnsemblBacteria" id="AAC37061">
    <property type="protein sequence ID" value="AAC37061"/>
    <property type="gene ID" value="MJ_ECS03"/>
</dbReference>
<dbReference type="GeneID" id="1450830"/>
<dbReference type="KEGG" id="mja:MJ_ECS03"/>
<dbReference type="eggNOG" id="arCOG04492">
    <property type="taxonomic scope" value="Archaea"/>
</dbReference>
<dbReference type="HOGENOM" id="CLU_151711_0_0_2"/>
<dbReference type="InParanoid" id="Q60302"/>
<dbReference type="OrthoDB" id="68955at2157"/>
<dbReference type="PhylomeDB" id="Q60302"/>
<dbReference type="Proteomes" id="UP000000805">
    <property type="component" value="Plasmid pDSM2661_2"/>
</dbReference>
<dbReference type="Gene3D" id="2.30.130.30">
    <property type="entry name" value="Hypothetical protein"/>
    <property type="match status" value="1"/>
</dbReference>
<dbReference type="InterPro" id="IPR007176">
    <property type="entry name" value="DUF365"/>
</dbReference>
<dbReference type="Pfam" id="PF04033">
    <property type="entry name" value="DUF365"/>
    <property type="match status" value="1"/>
</dbReference>
<dbReference type="PIRSF" id="PIRSF006031">
    <property type="entry name" value="UCP006031"/>
    <property type="match status" value="1"/>
</dbReference>
<protein>
    <recommendedName>
        <fullName>Uncharacterized protein MJECS03</fullName>
    </recommendedName>
</protein>
<proteinExistence type="predicted"/>